<accession>Q7V9W8</accession>
<organism>
    <name type="scientific">Prochlorococcus marinus (strain SARG / CCMP1375 / SS120)</name>
    <dbReference type="NCBI Taxonomy" id="167539"/>
    <lineage>
        <taxon>Bacteria</taxon>
        <taxon>Bacillati</taxon>
        <taxon>Cyanobacteriota</taxon>
        <taxon>Cyanophyceae</taxon>
        <taxon>Synechococcales</taxon>
        <taxon>Prochlorococcaceae</taxon>
        <taxon>Prochlorococcus</taxon>
    </lineage>
</organism>
<protein>
    <recommendedName>
        <fullName evidence="1">Small ribosomal subunit protein uS3</fullName>
    </recommendedName>
    <alternativeName>
        <fullName evidence="3">30S ribosomal protein S3</fullName>
    </alternativeName>
</protein>
<name>RS3_PROMA</name>
<sequence length="243" mass="27403">MGHKIHPNGLRLGITQEHRSRWYASSKTYPLLLQEDDRIRVFIQKKYGAAGISDVLIARKADQLEVELKTARPGVIVGRQGSGIEELRSGIQKTIGDRSRQVRINVVEIERVDADAHLLAEYIAQQLEKRVAFRRTIRMAVQRAQRAGVLGLKIQVGGRLNGAEIARSEWTREGRVPLHTLRAEIDYANKTANTTYGVLGIKVWVFKGEVLSKEEQPLPVGASPRRKGNRRPQQFEDRSNDGK</sequence>
<feature type="chain" id="PRO_0000130175" description="Small ribosomal subunit protein uS3">
    <location>
        <begin position="1"/>
        <end position="243"/>
    </location>
</feature>
<feature type="domain" description="KH type-2" evidence="1">
    <location>
        <begin position="39"/>
        <end position="110"/>
    </location>
</feature>
<feature type="region of interest" description="Disordered" evidence="2">
    <location>
        <begin position="216"/>
        <end position="243"/>
    </location>
</feature>
<feature type="compositionally biased region" description="Basic and acidic residues" evidence="2">
    <location>
        <begin position="233"/>
        <end position="243"/>
    </location>
</feature>
<keyword id="KW-1185">Reference proteome</keyword>
<keyword id="KW-0687">Ribonucleoprotein</keyword>
<keyword id="KW-0689">Ribosomal protein</keyword>
<keyword id="KW-0694">RNA-binding</keyword>
<keyword id="KW-0699">rRNA-binding</keyword>
<evidence type="ECO:0000255" key="1">
    <source>
        <dbReference type="HAMAP-Rule" id="MF_01309"/>
    </source>
</evidence>
<evidence type="ECO:0000256" key="2">
    <source>
        <dbReference type="SAM" id="MobiDB-lite"/>
    </source>
</evidence>
<evidence type="ECO:0000305" key="3"/>
<reference key="1">
    <citation type="journal article" date="2003" name="Proc. Natl. Acad. Sci. U.S.A.">
        <title>Genome sequence of the cyanobacterium Prochlorococcus marinus SS120, a nearly minimal oxyphototrophic genome.</title>
        <authorList>
            <person name="Dufresne A."/>
            <person name="Salanoubat M."/>
            <person name="Partensky F."/>
            <person name="Artiguenave F."/>
            <person name="Axmann I.M."/>
            <person name="Barbe V."/>
            <person name="Duprat S."/>
            <person name="Galperin M.Y."/>
            <person name="Koonin E.V."/>
            <person name="Le Gall F."/>
            <person name="Makarova K.S."/>
            <person name="Ostrowski M."/>
            <person name="Oztas S."/>
            <person name="Robert C."/>
            <person name="Rogozin I.B."/>
            <person name="Scanlan D.J."/>
            <person name="Tandeau de Marsac N."/>
            <person name="Weissenbach J."/>
            <person name="Wincker P."/>
            <person name="Wolf Y.I."/>
            <person name="Hess W.R."/>
        </authorList>
    </citation>
    <scope>NUCLEOTIDE SEQUENCE [LARGE SCALE GENOMIC DNA]</scope>
    <source>
        <strain>SARG / CCMP1375 / SS120</strain>
    </source>
</reference>
<dbReference type="EMBL" id="AE017126">
    <property type="protein sequence ID" value="AAQ00750.1"/>
    <property type="molecule type" value="Genomic_DNA"/>
</dbReference>
<dbReference type="RefSeq" id="NP_876097.1">
    <property type="nucleotide sequence ID" value="NC_005042.1"/>
</dbReference>
<dbReference type="RefSeq" id="WP_011125855.1">
    <property type="nucleotide sequence ID" value="NC_005042.1"/>
</dbReference>
<dbReference type="SMR" id="Q7V9W8"/>
<dbReference type="STRING" id="167539.Pro_1706"/>
<dbReference type="EnsemblBacteria" id="AAQ00750">
    <property type="protein sequence ID" value="AAQ00750"/>
    <property type="gene ID" value="Pro_1706"/>
</dbReference>
<dbReference type="KEGG" id="pma:Pro_1706"/>
<dbReference type="PATRIC" id="fig|167539.5.peg.1801"/>
<dbReference type="eggNOG" id="COG0092">
    <property type="taxonomic scope" value="Bacteria"/>
</dbReference>
<dbReference type="HOGENOM" id="CLU_058591_0_2_3"/>
<dbReference type="OrthoDB" id="9806396at2"/>
<dbReference type="Proteomes" id="UP000001420">
    <property type="component" value="Chromosome"/>
</dbReference>
<dbReference type="GO" id="GO:0022627">
    <property type="term" value="C:cytosolic small ribosomal subunit"/>
    <property type="evidence" value="ECO:0007669"/>
    <property type="project" value="TreeGrafter"/>
</dbReference>
<dbReference type="GO" id="GO:0003729">
    <property type="term" value="F:mRNA binding"/>
    <property type="evidence" value="ECO:0007669"/>
    <property type="project" value="UniProtKB-UniRule"/>
</dbReference>
<dbReference type="GO" id="GO:0019843">
    <property type="term" value="F:rRNA binding"/>
    <property type="evidence" value="ECO:0007669"/>
    <property type="project" value="UniProtKB-UniRule"/>
</dbReference>
<dbReference type="GO" id="GO:0003735">
    <property type="term" value="F:structural constituent of ribosome"/>
    <property type="evidence" value="ECO:0007669"/>
    <property type="project" value="InterPro"/>
</dbReference>
<dbReference type="GO" id="GO:0006412">
    <property type="term" value="P:translation"/>
    <property type="evidence" value="ECO:0007669"/>
    <property type="project" value="UniProtKB-UniRule"/>
</dbReference>
<dbReference type="CDD" id="cd02412">
    <property type="entry name" value="KH-II_30S_S3"/>
    <property type="match status" value="1"/>
</dbReference>
<dbReference type="FunFam" id="3.30.300.20:FF:000001">
    <property type="entry name" value="30S ribosomal protein S3"/>
    <property type="match status" value="1"/>
</dbReference>
<dbReference type="Gene3D" id="3.30.300.20">
    <property type="match status" value="1"/>
</dbReference>
<dbReference type="Gene3D" id="3.30.1140.32">
    <property type="entry name" value="Ribosomal protein S3, C-terminal domain"/>
    <property type="match status" value="1"/>
</dbReference>
<dbReference type="HAMAP" id="MF_01309_B">
    <property type="entry name" value="Ribosomal_uS3_B"/>
    <property type="match status" value="1"/>
</dbReference>
<dbReference type="InterPro" id="IPR004087">
    <property type="entry name" value="KH_dom"/>
</dbReference>
<dbReference type="InterPro" id="IPR015946">
    <property type="entry name" value="KH_dom-like_a/b"/>
</dbReference>
<dbReference type="InterPro" id="IPR004044">
    <property type="entry name" value="KH_dom_type_2"/>
</dbReference>
<dbReference type="InterPro" id="IPR009019">
    <property type="entry name" value="KH_sf_prok-type"/>
</dbReference>
<dbReference type="InterPro" id="IPR036419">
    <property type="entry name" value="Ribosomal_S3_C_sf"/>
</dbReference>
<dbReference type="InterPro" id="IPR005704">
    <property type="entry name" value="Ribosomal_uS3_bac-typ"/>
</dbReference>
<dbReference type="InterPro" id="IPR001351">
    <property type="entry name" value="Ribosomal_uS3_C"/>
</dbReference>
<dbReference type="InterPro" id="IPR018280">
    <property type="entry name" value="Ribosomal_uS3_CS"/>
</dbReference>
<dbReference type="NCBIfam" id="TIGR01009">
    <property type="entry name" value="rpsC_bact"/>
    <property type="match status" value="1"/>
</dbReference>
<dbReference type="PANTHER" id="PTHR11760">
    <property type="entry name" value="30S/40S RIBOSOMAL PROTEIN S3"/>
    <property type="match status" value="1"/>
</dbReference>
<dbReference type="PANTHER" id="PTHR11760:SF19">
    <property type="entry name" value="SMALL RIBOSOMAL SUBUNIT PROTEIN US3C"/>
    <property type="match status" value="1"/>
</dbReference>
<dbReference type="Pfam" id="PF07650">
    <property type="entry name" value="KH_2"/>
    <property type="match status" value="1"/>
</dbReference>
<dbReference type="Pfam" id="PF00189">
    <property type="entry name" value="Ribosomal_S3_C"/>
    <property type="match status" value="1"/>
</dbReference>
<dbReference type="SMART" id="SM00322">
    <property type="entry name" value="KH"/>
    <property type="match status" value="1"/>
</dbReference>
<dbReference type="SUPFAM" id="SSF54814">
    <property type="entry name" value="Prokaryotic type KH domain (KH-domain type II)"/>
    <property type="match status" value="1"/>
</dbReference>
<dbReference type="SUPFAM" id="SSF54821">
    <property type="entry name" value="Ribosomal protein S3 C-terminal domain"/>
    <property type="match status" value="1"/>
</dbReference>
<dbReference type="PROSITE" id="PS50823">
    <property type="entry name" value="KH_TYPE_2"/>
    <property type="match status" value="1"/>
</dbReference>
<dbReference type="PROSITE" id="PS00548">
    <property type="entry name" value="RIBOSOMAL_S3"/>
    <property type="match status" value="1"/>
</dbReference>
<gene>
    <name evidence="1" type="primary">rpsC</name>
    <name evidence="1" type="synonym">rps3</name>
    <name type="ordered locus">Pro_1706</name>
</gene>
<proteinExistence type="inferred from homology"/>
<comment type="function">
    <text evidence="1">Binds the lower part of the 30S subunit head. Binds mRNA in the 70S ribosome, positioning it for translation.</text>
</comment>
<comment type="subunit">
    <text evidence="1">Part of the 30S ribosomal subunit. Forms a tight complex with proteins S10 and S14.</text>
</comment>
<comment type="similarity">
    <text evidence="1">Belongs to the universal ribosomal protein uS3 family.</text>
</comment>